<keyword id="KW-0150">Chloroplast</keyword>
<keyword id="KW-0934">Plastid</keyword>
<keyword id="KW-0687">Ribonucleoprotein</keyword>
<keyword id="KW-0689">Ribosomal protein</keyword>
<keyword id="KW-0694">RNA-binding</keyword>
<keyword id="KW-0699">rRNA-binding</keyword>
<reference key="1">
    <citation type="journal article" date="2004" name="Mol. Biol. Evol.">
        <title>Chloroplast phylogeny indicates that bryophytes are monophyletic.</title>
        <authorList>
            <person name="Nishiyama T."/>
            <person name="Wolf P.G."/>
            <person name="Kugita M."/>
            <person name="Sinclair R.B."/>
            <person name="Sugita M."/>
            <person name="Sugiura C."/>
            <person name="Wakasugi T."/>
            <person name="Yamada K."/>
            <person name="Yoshinaga K."/>
            <person name="Yamaguchi K."/>
            <person name="Ueda K."/>
            <person name="Hasebe M."/>
        </authorList>
    </citation>
    <scope>NUCLEOTIDE SEQUENCE [LARGE SCALE GENOMIC DNA]</scope>
    <source>
        <strain>Kingyoku</strain>
    </source>
</reference>
<accession>Q8WHZ8</accession>
<comment type="function">
    <text evidence="1">Binds directly to 23S ribosomal RNA and is necessary for the in vitro assembly process of the 50S ribosomal subunit. It is not involved in the protein synthesizing functions of that subunit.</text>
</comment>
<comment type="subcellular location">
    <subcellularLocation>
        <location>Plastid</location>
        <location>Chloroplast</location>
    </subcellularLocation>
</comment>
<comment type="similarity">
    <text evidence="1">Belongs to the bacterial ribosomal protein bL20 family.</text>
</comment>
<organism>
    <name type="scientific">Psilotum nudum</name>
    <name type="common">Whisk fern</name>
    <name type="synonym">Lycopodium nudum</name>
    <dbReference type="NCBI Taxonomy" id="3240"/>
    <lineage>
        <taxon>Eukaryota</taxon>
        <taxon>Viridiplantae</taxon>
        <taxon>Streptophyta</taxon>
        <taxon>Embryophyta</taxon>
        <taxon>Tracheophyta</taxon>
        <taxon>Polypodiopsida</taxon>
        <taxon>Ophioglossidae</taxon>
        <taxon>Psilotales</taxon>
        <taxon>Psilotaceae</taxon>
        <taxon>Psilotum</taxon>
    </lineage>
</organism>
<feature type="chain" id="PRO_0000177308" description="Large ribosomal subunit protein bL20c">
    <location>
        <begin position="1"/>
        <end position="114"/>
    </location>
</feature>
<protein>
    <recommendedName>
        <fullName evidence="1">Large ribosomal subunit protein bL20c</fullName>
    </recommendedName>
    <alternativeName>
        <fullName evidence="2">50S ribosomal protein L20, chloroplastic</fullName>
    </alternativeName>
</protein>
<dbReference type="EMBL" id="AP004638">
    <property type="protein sequence ID" value="BAB84239.1"/>
    <property type="molecule type" value="Genomic_DNA"/>
</dbReference>
<dbReference type="RefSeq" id="NP_569652.1">
    <property type="nucleotide sequence ID" value="NC_003386.1"/>
</dbReference>
<dbReference type="SMR" id="Q8WHZ8"/>
<dbReference type="GeneID" id="2545157"/>
<dbReference type="GO" id="GO:0009507">
    <property type="term" value="C:chloroplast"/>
    <property type="evidence" value="ECO:0007669"/>
    <property type="project" value="UniProtKB-SubCell"/>
</dbReference>
<dbReference type="GO" id="GO:1990904">
    <property type="term" value="C:ribonucleoprotein complex"/>
    <property type="evidence" value="ECO:0007669"/>
    <property type="project" value="UniProtKB-KW"/>
</dbReference>
<dbReference type="GO" id="GO:0005840">
    <property type="term" value="C:ribosome"/>
    <property type="evidence" value="ECO:0007669"/>
    <property type="project" value="UniProtKB-KW"/>
</dbReference>
<dbReference type="GO" id="GO:0019843">
    <property type="term" value="F:rRNA binding"/>
    <property type="evidence" value="ECO:0007669"/>
    <property type="project" value="UniProtKB-UniRule"/>
</dbReference>
<dbReference type="GO" id="GO:0003735">
    <property type="term" value="F:structural constituent of ribosome"/>
    <property type="evidence" value="ECO:0007669"/>
    <property type="project" value="InterPro"/>
</dbReference>
<dbReference type="GO" id="GO:0000027">
    <property type="term" value="P:ribosomal large subunit assembly"/>
    <property type="evidence" value="ECO:0007669"/>
    <property type="project" value="UniProtKB-UniRule"/>
</dbReference>
<dbReference type="GO" id="GO:0006412">
    <property type="term" value="P:translation"/>
    <property type="evidence" value="ECO:0007669"/>
    <property type="project" value="InterPro"/>
</dbReference>
<dbReference type="CDD" id="cd07026">
    <property type="entry name" value="Ribosomal_L20"/>
    <property type="match status" value="1"/>
</dbReference>
<dbReference type="FunFam" id="1.10.1900.20:FF:000001">
    <property type="entry name" value="50S ribosomal protein L20"/>
    <property type="match status" value="1"/>
</dbReference>
<dbReference type="Gene3D" id="6.10.160.10">
    <property type="match status" value="1"/>
</dbReference>
<dbReference type="Gene3D" id="1.10.1900.20">
    <property type="entry name" value="Ribosomal protein L20"/>
    <property type="match status" value="1"/>
</dbReference>
<dbReference type="HAMAP" id="MF_00382">
    <property type="entry name" value="Ribosomal_bL20"/>
    <property type="match status" value="1"/>
</dbReference>
<dbReference type="InterPro" id="IPR005813">
    <property type="entry name" value="Ribosomal_bL20"/>
</dbReference>
<dbReference type="InterPro" id="IPR049946">
    <property type="entry name" value="RIBOSOMAL_L20_CS"/>
</dbReference>
<dbReference type="InterPro" id="IPR035566">
    <property type="entry name" value="Ribosomal_protein_bL20_C"/>
</dbReference>
<dbReference type="NCBIfam" id="TIGR01032">
    <property type="entry name" value="rplT_bact"/>
    <property type="match status" value="1"/>
</dbReference>
<dbReference type="PANTHER" id="PTHR10986">
    <property type="entry name" value="39S RIBOSOMAL PROTEIN L20"/>
    <property type="match status" value="1"/>
</dbReference>
<dbReference type="Pfam" id="PF00453">
    <property type="entry name" value="Ribosomal_L20"/>
    <property type="match status" value="1"/>
</dbReference>
<dbReference type="PRINTS" id="PR00062">
    <property type="entry name" value="RIBOSOMALL20"/>
</dbReference>
<dbReference type="SUPFAM" id="SSF74731">
    <property type="entry name" value="Ribosomal protein L20"/>
    <property type="match status" value="1"/>
</dbReference>
<dbReference type="PROSITE" id="PS00937">
    <property type="entry name" value="RIBOSOMAL_L20"/>
    <property type="match status" value="1"/>
</dbReference>
<name>RK20_PSINU</name>
<proteinExistence type="inferred from homology"/>
<geneLocation type="chloroplast"/>
<gene>
    <name evidence="1" type="primary">rpl20</name>
</gene>
<sequence length="114" mass="13493">MTRVKRGYVARRHRNRILALTSGFQGAHSKLFRTANQQGMKALTYAYRDRANCKRDFRRLWITRINAAARENQITYNNMIHSLYMNQIHLNRKILAQIAALDKDCFVEILRIIK</sequence>
<evidence type="ECO:0000255" key="1">
    <source>
        <dbReference type="HAMAP-Rule" id="MF_00382"/>
    </source>
</evidence>
<evidence type="ECO:0000305" key="2"/>